<dbReference type="EC" id="2.7.7.3" evidence="1"/>
<dbReference type="EMBL" id="BA000040">
    <property type="protein sequence ID" value="BAC49958.1"/>
    <property type="molecule type" value="Genomic_DNA"/>
</dbReference>
<dbReference type="RefSeq" id="NP_771333.1">
    <property type="nucleotide sequence ID" value="NC_004463.1"/>
</dbReference>
<dbReference type="RefSeq" id="WP_011087462.1">
    <property type="nucleotide sequence ID" value="NC_004463.1"/>
</dbReference>
<dbReference type="SMR" id="Q89L55"/>
<dbReference type="FunCoup" id="Q89L55">
    <property type="interactions" value="550"/>
</dbReference>
<dbReference type="STRING" id="224911.AAV28_20760"/>
<dbReference type="EnsemblBacteria" id="BAC49958">
    <property type="protein sequence ID" value="BAC49958"/>
    <property type="gene ID" value="BAC49958"/>
</dbReference>
<dbReference type="GeneID" id="46491703"/>
<dbReference type="KEGG" id="bja:bll4693"/>
<dbReference type="PATRIC" id="fig|224911.44.peg.4520"/>
<dbReference type="eggNOG" id="COG0669">
    <property type="taxonomic scope" value="Bacteria"/>
</dbReference>
<dbReference type="HOGENOM" id="CLU_100149_0_1_5"/>
<dbReference type="InParanoid" id="Q89L55"/>
<dbReference type="OrthoDB" id="9806661at2"/>
<dbReference type="PhylomeDB" id="Q89L55"/>
<dbReference type="UniPathway" id="UPA00241">
    <property type="reaction ID" value="UER00355"/>
</dbReference>
<dbReference type="Proteomes" id="UP000002526">
    <property type="component" value="Chromosome"/>
</dbReference>
<dbReference type="GO" id="GO:0005737">
    <property type="term" value="C:cytoplasm"/>
    <property type="evidence" value="ECO:0007669"/>
    <property type="project" value="UniProtKB-SubCell"/>
</dbReference>
<dbReference type="GO" id="GO:0005524">
    <property type="term" value="F:ATP binding"/>
    <property type="evidence" value="ECO:0007669"/>
    <property type="project" value="UniProtKB-KW"/>
</dbReference>
<dbReference type="GO" id="GO:0004595">
    <property type="term" value="F:pantetheine-phosphate adenylyltransferase activity"/>
    <property type="evidence" value="ECO:0000318"/>
    <property type="project" value="GO_Central"/>
</dbReference>
<dbReference type="GO" id="GO:0015937">
    <property type="term" value="P:coenzyme A biosynthetic process"/>
    <property type="evidence" value="ECO:0000318"/>
    <property type="project" value="GO_Central"/>
</dbReference>
<dbReference type="CDD" id="cd02163">
    <property type="entry name" value="PPAT"/>
    <property type="match status" value="1"/>
</dbReference>
<dbReference type="Gene3D" id="3.40.50.620">
    <property type="entry name" value="HUPs"/>
    <property type="match status" value="1"/>
</dbReference>
<dbReference type="HAMAP" id="MF_00151">
    <property type="entry name" value="PPAT_bact"/>
    <property type="match status" value="1"/>
</dbReference>
<dbReference type="InterPro" id="IPR004821">
    <property type="entry name" value="Cyt_trans-like"/>
</dbReference>
<dbReference type="InterPro" id="IPR001980">
    <property type="entry name" value="PPAT"/>
</dbReference>
<dbReference type="InterPro" id="IPR014729">
    <property type="entry name" value="Rossmann-like_a/b/a_fold"/>
</dbReference>
<dbReference type="NCBIfam" id="TIGR01510">
    <property type="entry name" value="coaD_prev_kdtB"/>
    <property type="match status" value="1"/>
</dbReference>
<dbReference type="NCBIfam" id="TIGR00125">
    <property type="entry name" value="cyt_tran_rel"/>
    <property type="match status" value="1"/>
</dbReference>
<dbReference type="PANTHER" id="PTHR21342">
    <property type="entry name" value="PHOSPHOPANTETHEINE ADENYLYLTRANSFERASE"/>
    <property type="match status" value="1"/>
</dbReference>
<dbReference type="PANTHER" id="PTHR21342:SF1">
    <property type="entry name" value="PHOSPHOPANTETHEINE ADENYLYLTRANSFERASE"/>
    <property type="match status" value="1"/>
</dbReference>
<dbReference type="Pfam" id="PF01467">
    <property type="entry name" value="CTP_transf_like"/>
    <property type="match status" value="1"/>
</dbReference>
<dbReference type="PRINTS" id="PR01020">
    <property type="entry name" value="LPSBIOSNTHSS"/>
</dbReference>
<dbReference type="SUPFAM" id="SSF52374">
    <property type="entry name" value="Nucleotidylyl transferase"/>
    <property type="match status" value="1"/>
</dbReference>
<accession>Q89L55</accession>
<comment type="function">
    <text evidence="1">Reversibly transfers an adenylyl group from ATP to 4'-phosphopantetheine, yielding dephospho-CoA (dPCoA) and pyrophosphate.</text>
</comment>
<comment type="catalytic activity">
    <reaction evidence="1">
        <text>(R)-4'-phosphopantetheine + ATP + H(+) = 3'-dephospho-CoA + diphosphate</text>
        <dbReference type="Rhea" id="RHEA:19801"/>
        <dbReference type="ChEBI" id="CHEBI:15378"/>
        <dbReference type="ChEBI" id="CHEBI:30616"/>
        <dbReference type="ChEBI" id="CHEBI:33019"/>
        <dbReference type="ChEBI" id="CHEBI:57328"/>
        <dbReference type="ChEBI" id="CHEBI:61723"/>
        <dbReference type="EC" id="2.7.7.3"/>
    </reaction>
</comment>
<comment type="cofactor">
    <cofactor evidence="1">
        <name>Mg(2+)</name>
        <dbReference type="ChEBI" id="CHEBI:18420"/>
    </cofactor>
</comment>
<comment type="pathway">
    <text evidence="1">Cofactor biosynthesis; coenzyme A biosynthesis; CoA from (R)-pantothenate: step 4/5.</text>
</comment>
<comment type="subunit">
    <text evidence="1">Homohexamer.</text>
</comment>
<comment type="subcellular location">
    <subcellularLocation>
        <location evidence="1">Cytoplasm</location>
    </subcellularLocation>
</comment>
<comment type="similarity">
    <text evidence="1">Belongs to the bacterial CoaD family.</text>
</comment>
<reference key="1">
    <citation type="journal article" date="2002" name="DNA Res.">
        <title>Complete genomic sequence of nitrogen-fixing symbiotic bacterium Bradyrhizobium japonicum USDA110.</title>
        <authorList>
            <person name="Kaneko T."/>
            <person name="Nakamura Y."/>
            <person name="Sato S."/>
            <person name="Minamisawa K."/>
            <person name="Uchiumi T."/>
            <person name="Sasamoto S."/>
            <person name="Watanabe A."/>
            <person name="Idesawa K."/>
            <person name="Iriguchi M."/>
            <person name="Kawashima K."/>
            <person name="Kohara M."/>
            <person name="Matsumoto M."/>
            <person name="Shimpo S."/>
            <person name="Tsuruoka H."/>
            <person name="Wada T."/>
            <person name="Yamada M."/>
            <person name="Tabata S."/>
        </authorList>
    </citation>
    <scope>NUCLEOTIDE SEQUENCE [LARGE SCALE GENOMIC DNA]</scope>
    <source>
        <strain>JCM 10833 / BCRC 13528 / IAM 13628 / NBRC 14792 / USDA 110</strain>
    </source>
</reference>
<evidence type="ECO:0000255" key="1">
    <source>
        <dbReference type="HAMAP-Rule" id="MF_00151"/>
    </source>
</evidence>
<gene>
    <name evidence="1" type="primary">coaD</name>
    <name type="ordered locus">bll4693</name>
</gene>
<proteinExistence type="inferred from homology"/>
<keyword id="KW-0067">ATP-binding</keyword>
<keyword id="KW-0173">Coenzyme A biosynthesis</keyword>
<keyword id="KW-0963">Cytoplasm</keyword>
<keyword id="KW-0460">Magnesium</keyword>
<keyword id="KW-0547">Nucleotide-binding</keyword>
<keyword id="KW-0548">Nucleotidyltransferase</keyword>
<keyword id="KW-1185">Reference proteome</keyword>
<keyword id="KW-0808">Transferase</keyword>
<protein>
    <recommendedName>
        <fullName evidence="1">Phosphopantetheine adenylyltransferase</fullName>
        <ecNumber evidence="1">2.7.7.3</ecNumber>
    </recommendedName>
    <alternativeName>
        <fullName evidence="1">Dephospho-CoA pyrophosphorylase</fullName>
    </alternativeName>
    <alternativeName>
        <fullName evidence="1">Pantetheine-phosphate adenylyltransferase</fullName>
        <shortName evidence="1">PPAT</shortName>
    </alternativeName>
</protein>
<organism>
    <name type="scientific">Bradyrhizobium diazoefficiens (strain JCM 10833 / BCRC 13528 / IAM 13628 / NBRC 14792 / USDA 110)</name>
    <dbReference type="NCBI Taxonomy" id="224911"/>
    <lineage>
        <taxon>Bacteria</taxon>
        <taxon>Pseudomonadati</taxon>
        <taxon>Pseudomonadota</taxon>
        <taxon>Alphaproteobacteria</taxon>
        <taxon>Hyphomicrobiales</taxon>
        <taxon>Nitrobacteraceae</taxon>
        <taxon>Bradyrhizobium</taxon>
    </lineage>
</organism>
<name>COAD_BRADU</name>
<sequence length="165" mass="17652">MPRIAFYPGSFDPITNGHLDVVRHAVPLCDRLVVAIGVHPGKKPLFSTEERLRMLEDVCGPVATQAGCVLEAVTFDDLSVTAARKHGATIMIRGLRDGTDLDYEMQLAGMNEAMAPEVHTVFLPASPMVRPITATLVRQIAGMGGDVSTFVPPLVASLLKAKFAG</sequence>
<feature type="chain" id="PRO_0000156181" description="Phosphopantetheine adenylyltransferase">
    <location>
        <begin position="1"/>
        <end position="165"/>
    </location>
</feature>
<feature type="binding site" evidence="1">
    <location>
        <begin position="10"/>
        <end position="11"/>
    </location>
    <ligand>
        <name>ATP</name>
        <dbReference type="ChEBI" id="CHEBI:30616"/>
    </ligand>
</feature>
<feature type="binding site" evidence="1">
    <location>
        <position position="10"/>
    </location>
    <ligand>
        <name>substrate</name>
    </ligand>
</feature>
<feature type="binding site" evidence="1">
    <location>
        <position position="18"/>
    </location>
    <ligand>
        <name>ATP</name>
        <dbReference type="ChEBI" id="CHEBI:30616"/>
    </ligand>
</feature>
<feature type="binding site" evidence="1">
    <location>
        <position position="42"/>
    </location>
    <ligand>
        <name>substrate</name>
    </ligand>
</feature>
<feature type="binding site" evidence="1">
    <location>
        <position position="79"/>
    </location>
    <ligand>
        <name>substrate</name>
    </ligand>
</feature>
<feature type="binding site" evidence="1">
    <location>
        <position position="93"/>
    </location>
    <ligand>
        <name>substrate</name>
    </ligand>
</feature>
<feature type="binding site" evidence="1">
    <location>
        <begin position="94"/>
        <end position="96"/>
    </location>
    <ligand>
        <name>ATP</name>
        <dbReference type="ChEBI" id="CHEBI:30616"/>
    </ligand>
</feature>
<feature type="binding site" evidence="1">
    <location>
        <position position="104"/>
    </location>
    <ligand>
        <name>ATP</name>
        <dbReference type="ChEBI" id="CHEBI:30616"/>
    </ligand>
</feature>
<feature type="binding site" evidence="1">
    <location>
        <begin position="129"/>
        <end position="135"/>
    </location>
    <ligand>
        <name>ATP</name>
        <dbReference type="ChEBI" id="CHEBI:30616"/>
    </ligand>
</feature>
<feature type="site" description="Transition state stabilizer" evidence="1">
    <location>
        <position position="18"/>
    </location>
</feature>